<organismHost>
    <name type="scientific">Acheta domesticus</name>
    <name type="common">House cricket</name>
    <dbReference type="NCBI Taxonomy" id="6997"/>
</organismHost>
<organismHost>
    <name type="scientific">Chilo suppressalis</name>
    <name type="common">Asiatic rice borer moth</name>
    <dbReference type="NCBI Taxonomy" id="168631"/>
</organismHost>
<organismHost>
    <name type="scientific">Gryllus bimaculatus</name>
    <name type="common">Two-spotted cricket</name>
    <dbReference type="NCBI Taxonomy" id="6999"/>
</organismHost>
<organismHost>
    <name type="scientific">Gryllus campestris</name>
    <dbReference type="NCBI Taxonomy" id="58607"/>
</organismHost>
<organismHost>
    <name type="scientific">Spodoptera frugiperda</name>
    <name type="common">Fall armyworm</name>
    <dbReference type="NCBI Taxonomy" id="7108"/>
</organismHost>
<feature type="chain" id="PRO_0000377774" description="Putative ubiquitin thioesterase 232R">
    <location>
        <begin position="1"/>
        <end position="671"/>
    </location>
</feature>
<feature type="domain" description="OTU" evidence="4">
    <location>
        <begin position="392"/>
        <end position="521"/>
    </location>
</feature>
<feature type="region of interest" description="Disordered" evidence="5">
    <location>
        <begin position="36"/>
        <end position="62"/>
    </location>
</feature>
<feature type="region of interest" description="Disordered" evidence="5">
    <location>
        <begin position="100"/>
        <end position="123"/>
    </location>
</feature>
<feature type="region of interest" description="Disordered" evidence="5">
    <location>
        <begin position="171"/>
        <end position="203"/>
    </location>
</feature>
<feature type="region of interest" description="Disordered" evidence="5">
    <location>
        <begin position="250"/>
        <end position="319"/>
    </location>
</feature>
<feature type="region of interest" description="Disordered" evidence="5">
    <location>
        <begin position="589"/>
        <end position="625"/>
    </location>
</feature>
<feature type="compositionally biased region" description="Low complexity" evidence="5">
    <location>
        <begin position="110"/>
        <end position="123"/>
    </location>
</feature>
<feature type="compositionally biased region" description="Pro residues" evidence="5">
    <location>
        <begin position="182"/>
        <end position="200"/>
    </location>
</feature>
<feature type="compositionally biased region" description="Low complexity" evidence="5">
    <location>
        <begin position="255"/>
        <end position="271"/>
    </location>
</feature>
<feature type="compositionally biased region" description="Basic residues" evidence="5">
    <location>
        <begin position="272"/>
        <end position="319"/>
    </location>
</feature>
<feature type="active site" evidence="3">
    <location>
        <position position="400"/>
    </location>
</feature>
<feature type="active site" description="Nucleophile" evidence="2">
    <location>
        <position position="403"/>
    </location>
</feature>
<feature type="active site" evidence="2">
    <location>
        <position position="514"/>
    </location>
</feature>
<organism>
    <name type="scientific">Invertebrate iridescent virus 6</name>
    <name type="common">IIV-6</name>
    <name type="synonym">Chilo iridescent virus</name>
    <dbReference type="NCBI Taxonomy" id="176652"/>
    <lineage>
        <taxon>Viruses</taxon>
        <taxon>Varidnaviria</taxon>
        <taxon>Bamfordvirae</taxon>
        <taxon>Nucleocytoviricota</taxon>
        <taxon>Megaviricetes</taxon>
        <taxon>Pimascovirales</taxon>
        <taxon>Iridoviridae</taxon>
        <taxon>Betairidovirinae</taxon>
        <taxon>Iridovirus</taxon>
    </lineage>
</organism>
<accession>Q91FU0</accession>
<sequence length="671" mass="75605">MNNNQCMRKKLDELRNIARSYNISITGKKKQQLCDEIIDYQKNNPPRRSPSPRRSPSPRRISPECEQWLANKGINPRTGKAIKIGGPTYKKLEMECKEASPKIPSPVRQPSPVHSPVRSPVRQPSPVRFVEKTKGALNKMKKDQLIDFAQSLGLNPGKLLKPALVDLIFVNQKPPRRSPSPRRSPSPRRSPSPRRSPSPRPVFVEKTKGALNKMKKDQLIDLAQSLGLNPGKLLKPALVDLIFVNQKPVEPIRASSSSRSSRSTRRSSSTKPSRRSSSRSRRSSSRSRRSSSRSRRSSSRSRRSSRRSTSRSRSLSKRSIRNISTVGDLEDLVASNLPIAIPESLSRSLSPSRTDFHEAEIELGSDFDLNNLPENRIAELKQLNVLAKQNGFRMINVPLDGNCMFSVIGRAFNTSSSVIRQHTVDYLRRCKGSFDHIPANIDDPTINWNDYIDRLEEDACWGDNTALFAASLALNFQAHILQVAGGDEGSWIRFGVNETNMGRIVNMGYLDNFHYIALEPFSGRLDILSIPSTHSKCPPPEISNRRDEEIRRDEEVEDEVIGERIVREAEVIERELRQEEELTSIVSTKRSLRPSIPPKISTEHRRTPKLRPSVPRPSSIRQSQPNVAALARLETLTKIKDIIDALQRPLENKLSTLTNTEKAIMQCIGVA</sequence>
<proteinExistence type="inferred from homology"/>
<keyword id="KW-0378">Hydrolase</keyword>
<keyword id="KW-0645">Protease</keyword>
<keyword id="KW-1185">Reference proteome</keyword>
<keyword id="KW-0788">Thiol protease</keyword>
<keyword id="KW-0833">Ubl conjugation pathway</keyword>
<evidence type="ECO:0000250" key="1"/>
<evidence type="ECO:0000250" key="2">
    <source>
        <dbReference type="UniProtKB" id="Q5VVQ6"/>
    </source>
</evidence>
<evidence type="ECO:0000250" key="3">
    <source>
        <dbReference type="UniProtKB" id="Q96FW1"/>
    </source>
</evidence>
<evidence type="ECO:0000255" key="4">
    <source>
        <dbReference type="PROSITE-ProRule" id="PRU00139"/>
    </source>
</evidence>
<evidence type="ECO:0000256" key="5">
    <source>
        <dbReference type="SAM" id="MobiDB-lite"/>
    </source>
</evidence>
<reference key="1">
    <citation type="journal article" date="2001" name="Virology">
        <title>Analysis of the first complete DNA sequence of an invertebrate iridovirus: coding strategy of the genome of Chilo iridescent virus.</title>
        <authorList>
            <person name="Jakob N.J."/>
            <person name="Mueller K."/>
            <person name="Bahr U."/>
            <person name="Darai G."/>
        </authorList>
    </citation>
    <scope>NUCLEOTIDE SEQUENCE [LARGE SCALE GENOMIC DNA]</scope>
</reference>
<reference key="2">
    <citation type="journal article" date="2007" name="Virol. J.">
        <title>Comparative genomic analysis of the family Iridoviridae: re-annotating and defining the core set of iridovirus genes.</title>
        <authorList>
            <person name="Eaton H.E."/>
            <person name="Metcalf J."/>
            <person name="Penny E."/>
            <person name="Tcherepanov V."/>
            <person name="Upton C."/>
            <person name="Brunetti C.R."/>
        </authorList>
    </citation>
    <scope>GENOME REANNOTATION</scope>
</reference>
<protein>
    <recommendedName>
        <fullName>Putative ubiquitin thioesterase 232R</fullName>
        <ecNumber evidence="2">3.4.19.12</ecNumber>
    </recommendedName>
</protein>
<gene>
    <name type="ORF">IIV6-232R</name>
</gene>
<dbReference type="EC" id="3.4.19.12" evidence="2"/>
<dbReference type="EMBL" id="AF303741">
    <property type="protein sequence ID" value="AAK82093.1"/>
    <property type="molecule type" value="Genomic_DNA"/>
</dbReference>
<dbReference type="RefSeq" id="NP_149695.1">
    <property type="nucleotide sequence ID" value="NC_003038.1"/>
</dbReference>
<dbReference type="SMR" id="Q91FU0"/>
<dbReference type="KEGG" id="vg:1733388"/>
<dbReference type="OrthoDB" id="17526at10239"/>
<dbReference type="Proteomes" id="UP000001359">
    <property type="component" value="Genome"/>
</dbReference>
<dbReference type="GO" id="GO:0004843">
    <property type="term" value="F:cysteine-type deubiquitinase activity"/>
    <property type="evidence" value="ECO:0007669"/>
    <property type="project" value="UniProtKB-EC"/>
</dbReference>
<dbReference type="GO" id="GO:0006353">
    <property type="term" value="P:DNA-templated transcription termination"/>
    <property type="evidence" value="ECO:0007669"/>
    <property type="project" value="InterPro"/>
</dbReference>
<dbReference type="GO" id="GO:0016579">
    <property type="term" value="P:protein deubiquitination"/>
    <property type="evidence" value="ECO:0007669"/>
    <property type="project" value="TreeGrafter"/>
</dbReference>
<dbReference type="GO" id="GO:0006508">
    <property type="term" value="P:proteolysis"/>
    <property type="evidence" value="ECO:0007669"/>
    <property type="project" value="UniProtKB-KW"/>
</dbReference>
<dbReference type="CDD" id="cd22758">
    <property type="entry name" value="OTU_232R-like"/>
    <property type="match status" value="1"/>
</dbReference>
<dbReference type="Gene3D" id="3.90.70.80">
    <property type="match status" value="1"/>
</dbReference>
<dbReference type="InterPro" id="IPR014901">
    <property type="entry name" value="2-cysteine_adaptor"/>
</dbReference>
<dbReference type="InterPro" id="IPR003323">
    <property type="entry name" value="OTU_dom"/>
</dbReference>
<dbReference type="InterPro" id="IPR038765">
    <property type="entry name" value="Papain-like_cys_pep_sf"/>
</dbReference>
<dbReference type="InterPro" id="IPR050704">
    <property type="entry name" value="Peptidase_C85-like"/>
</dbReference>
<dbReference type="InterPro" id="IPR011112">
    <property type="entry name" value="Rho-like_N"/>
</dbReference>
<dbReference type="PANTHER" id="PTHR12419">
    <property type="entry name" value="OTU DOMAIN CONTAINING PROTEIN"/>
    <property type="match status" value="1"/>
</dbReference>
<dbReference type="Pfam" id="PF08793">
    <property type="entry name" value="2C_adapt"/>
    <property type="match status" value="1"/>
</dbReference>
<dbReference type="Pfam" id="PF02338">
    <property type="entry name" value="OTU"/>
    <property type="match status" value="1"/>
</dbReference>
<dbReference type="SMART" id="SM00959">
    <property type="entry name" value="Rho_N"/>
    <property type="match status" value="3"/>
</dbReference>
<dbReference type="SUPFAM" id="SSF54001">
    <property type="entry name" value="Cysteine proteinases"/>
    <property type="match status" value="1"/>
</dbReference>
<dbReference type="PROSITE" id="PS50802">
    <property type="entry name" value="OTU"/>
    <property type="match status" value="1"/>
</dbReference>
<comment type="function">
    <text evidence="1">Hydrolase that can remove conjugated ubiquitin from proteins and may therefore play an important regulatory role at the level of protein turnover by preventing degradation.</text>
</comment>
<comment type="catalytic activity">
    <reaction evidence="2">
        <text>Thiol-dependent hydrolysis of ester, thioester, amide, peptide and isopeptide bonds formed by the C-terminal Gly of ubiquitin (a 76-residue protein attached to proteins as an intracellular targeting signal).</text>
        <dbReference type="EC" id="3.4.19.12"/>
    </reaction>
</comment>
<name>VF232_IIV6</name>